<evidence type="ECO:0000255" key="1">
    <source>
        <dbReference type="HAMAP-Rule" id="MF_00052"/>
    </source>
</evidence>
<evidence type="ECO:0000255" key="2">
    <source>
        <dbReference type="PROSITE-ProRule" id="PRU01319"/>
    </source>
</evidence>
<protein>
    <recommendedName>
        <fullName evidence="1">Ribonuclease HII</fullName>
        <shortName evidence="1">RNase HII</shortName>
        <ecNumber evidence="1">3.1.26.4</ecNumber>
    </recommendedName>
</protein>
<proteinExistence type="inferred from homology"/>
<comment type="function">
    <text evidence="1">Endonuclease that specifically degrades the RNA of RNA-DNA hybrids.</text>
</comment>
<comment type="catalytic activity">
    <reaction evidence="1">
        <text>Endonucleolytic cleavage to 5'-phosphomonoester.</text>
        <dbReference type="EC" id="3.1.26.4"/>
    </reaction>
</comment>
<comment type="cofactor">
    <cofactor evidence="1">
        <name>Mn(2+)</name>
        <dbReference type="ChEBI" id="CHEBI:29035"/>
    </cofactor>
    <cofactor evidence="1">
        <name>Mg(2+)</name>
        <dbReference type="ChEBI" id="CHEBI:18420"/>
    </cofactor>
    <text evidence="1">Manganese or magnesium. Binds 1 divalent metal ion per monomer in the absence of substrate. May bind a second metal ion after substrate binding.</text>
</comment>
<comment type="subcellular location">
    <subcellularLocation>
        <location evidence="1">Cytoplasm</location>
    </subcellularLocation>
</comment>
<comment type="similarity">
    <text evidence="1">Belongs to the RNase HII family.</text>
</comment>
<reference key="1">
    <citation type="journal article" date="2007" name="PLoS ONE">
        <title>Molecular correlates of host specialization in Staphylococcus aureus.</title>
        <authorList>
            <person name="Herron-Olson L."/>
            <person name="Fitzgerald J.R."/>
            <person name="Musser J.M."/>
            <person name="Kapur V."/>
        </authorList>
    </citation>
    <scope>NUCLEOTIDE SEQUENCE [LARGE SCALE GENOMIC DNA]</scope>
    <source>
        <strain>bovine RF122 / ET3-1</strain>
    </source>
</reference>
<name>RNH2_STAAB</name>
<keyword id="KW-0963">Cytoplasm</keyword>
<keyword id="KW-0255">Endonuclease</keyword>
<keyword id="KW-0378">Hydrolase</keyword>
<keyword id="KW-0464">Manganese</keyword>
<keyword id="KW-0479">Metal-binding</keyword>
<keyword id="KW-0540">Nuclease</keyword>
<feature type="chain" id="PRO_0000235768" description="Ribonuclease HII">
    <location>
        <begin position="1"/>
        <end position="255"/>
    </location>
</feature>
<feature type="domain" description="RNase H type-2" evidence="2">
    <location>
        <begin position="72"/>
        <end position="255"/>
    </location>
</feature>
<feature type="binding site" evidence="1">
    <location>
        <position position="78"/>
    </location>
    <ligand>
        <name>a divalent metal cation</name>
        <dbReference type="ChEBI" id="CHEBI:60240"/>
    </ligand>
</feature>
<feature type="binding site" evidence="1">
    <location>
        <position position="79"/>
    </location>
    <ligand>
        <name>a divalent metal cation</name>
        <dbReference type="ChEBI" id="CHEBI:60240"/>
    </ligand>
</feature>
<feature type="binding site" evidence="1">
    <location>
        <position position="170"/>
    </location>
    <ligand>
        <name>a divalent metal cation</name>
        <dbReference type="ChEBI" id="CHEBI:60240"/>
    </ligand>
</feature>
<dbReference type="EC" id="3.1.26.4" evidence="1"/>
<dbReference type="EMBL" id="AJ938182">
    <property type="protein sequence ID" value="CAI80797.1"/>
    <property type="molecule type" value="Genomic_DNA"/>
</dbReference>
<dbReference type="RefSeq" id="WP_000176397.1">
    <property type="nucleotide sequence ID" value="NC_007622.1"/>
</dbReference>
<dbReference type="SMR" id="Q2YXM2"/>
<dbReference type="KEGG" id="sab:SAB1108"/>
<dbReference type="HOGENOM" id="CLU_036532_2_1_9"/>
<dbReference type="GO" id="GO:0005737">
    <property type="term" value="C:cytoplasm"/>
    <property type="evidence" value="ECO:0007669"/>
    <property type="project" value="UniProtKB-SubCell"/>
</dbReference>
<dbReference type="GO" id="GO:0032299">
    <property type="term" value="C:ribonuclease H2 complex"/>
    <property type="evidence" value="ECO:0007669"/>
    <property type="project" value="TreeGrafter"/>
</dbReference>
<dbReference type="GO" id="GO:0030145">
    <property type="term" value="F:manganese ion binding"/>
    <property type="evidence" value="ECO:0007669"/>
    <property type="project" value="UniProtKB-UniRule"/>
</dbReference>
<dbReference type="GO" id="GO:0003723">
    <property type="term" value="F:RNA binding"/>
    <property type="evidence" value="ECO:0007669"/>
    <property type="project" value="InterPro"/>
</dbReference>
<dbReference type="GO" id="GO:0004523">
    <property type="term" value="F:RNA-DNA hybrid ribonuclease activity"/>
    <property type="evidence" value="ECO:0007669"/>
    <property type="project" value="UniProtKB-UniRule"/>
</dbReference>
<dbReference type="GO" id="GO:0043137">
    <property type="term" value="P:DNA replication, removal of RNA primer"/>
    <property type="evidence" value="ECO:0007669"/>
    <property type="project" value="TreeGrafter"/>
</dbReference>
<dbReference type="GO" id="GO:0006298">
    <property type="term" value="P:mismatch repair"/>
    <property type="evidence" value="ECO:0007669"/>
    <property type="project" value="TreeGrafter"/>
</dbReference>
<dbReference type="CDD" id="cd07182">
    <property type="entry name" value="RNase_HII_bacteria_HII_like"/>
    <property type="match status" value="1"/>
</dbReference>
<dbReference type="FunFam" id="3.30.420.10:FF:000006">
    <property type="entry name" value="Ribonuclease HII"/>
    <property type="match status" value="1"/>
</dbReference>
<dbReference type="Gene3D" id="3.30.420.10">
    <property type="entry name" value="Ribonuclease H-like superfamily/Ribonuclease H"/>
    <property type="match status" value="1"/>
</dbReference>
<dbReference type="HAMAP" id="MF_00052_B">
    <property type="entry name" value="RNase_HII_B"/>
    <property type="match status" value="1"/>
</dbReference>
<dbReference type="InterPro" id="IPR022898">
    <property type="entry name" value="RNase_HII"/>
</dbReference>
<dbReference type="InterPro" id="IPR001352">
    <property type="entry name" value="RNase_HII/HIII"/>
</dbReference>
<dbReference type="InterPro" id="IPR024567">
    <property type="entry name" value="RNase_HII/HIII_dom"/>
</dbReference>
<dbReference type="InterPro" id="IPR012337">
    <property type="entry name" value="RNaseH-like_sf"/>
</dbReference>
<dbReference type="InterPro" id="IPR036397">
    <property type="entry name" value="RNaseH_sf"/>
</dbReference>
<dbReference type="NCBIfam" id="NF000594">
    <property type="entry name" value="PRK00015.1-1"/>
    <property type="match status" value="1"/>
</dbReference>
<dbReference type="NCBIfam" id="NF000595">
    <property type="entry name" value="PRK00015.1-3"/>
    <property type="match status" value="1"/>
</dbReference>
<dbReference type="PANTHER" id="PTHR10954">
    <property type="entry name" value="RIBONUCLEASE H2 SUBUNIT A"/>
    <property type="match status" value="1"/>
</dbReference>
<dbReference type="PANTHER" id="PTHR10954:SF18">
    <property type="entry name" value="RIBONUCLEASE HII"/>
    <property type="match status" value="1"/>
</dbReference>
<dbReference type="Pfam" id="PF01351">
    <property type="entry name" value="RNase_HII"/>
    <property type="match status" value="1"/>
</dbReference>
<dbReference type="SUPFAM" id="SSF53098">
    <property type="entry name" value="Ribonuclease H-like"/>
    <property type="match status" value="1"/>
</dbReference>
<dbReference type="PROSITE" id="PS51975">
    <property type="entry name" value="RNASE_H_2"/>
    <property type="match status" value="1"/>
</dbReference>
<accession>Q2YXM2</accession>
<gene>
    <name evidence="1" type="primary">rnhB</name>
    <name type="ordered locus">SAB1108</name>
</gene>
<organism>
    <name type="scientific">Staphylococcus aureus (strain bovine RF122 / ET3-1)</name>
    <dbReference type="NCBI Taxonomy" id="273036"/>
    <lineage>
        <taxon>Bacteria</taxon>
        <taxon>Bacillati</taxon>
        <taxon>Bacillota</taxon>
        <taxon>Bacilli</taxon>
        <taxon>Bacillales</taxon>
        <taxon>Staphylococcaceae</taxon>
        <taxon>Staphylococcus</taxon>
    </lineage>
</organism>
<sequence>MTLTIKEVTQLINAVNTIEELENHECFLDERKGVQNAIARRRKALEKEQALKEKYVEMTYFENEILKENPNAIICGIDEVGRGPLAGPVVACAPILNSNHNYLGLDDSKKVPVTKRLELNEALKNEVTAFAFGIATAEEIDEFNIYKATQIAMQRAIDGLSVQPTHLLIDAMTLDNALPQVSLIKGDARSVSIAAASIMAKVFRDDYMTQLSKDYPEYGFEKNAGYGTKQHLLAIDDIGIMKEHRKSFEPIKSLL</sequence>